<accession>B4U2K8</accession>
<sequence>MSQDIYDYANKLERAVRALPEYRKALEAREEIKADEAASQLFDEFVAVQEKLQGLMQTGQLPTETEQADIQALSQKIEANDLLKGYFNAQQALSVYVNDIERIVFAPLKDLAK</sequence>
<proteinExistence type="inferred from homology"/>
<reference key="1">
    <citation type="journal article" date="2008" name="PLoS ONE">
        <title>Genome sequence of a lancefield group C Streptococcus zooepidemicus strain causing epidemic nephritis: new information about an old disease.</title>
        <authorList>
            <person name="Beres S.B."/>
            <person name="Sesso R."/>
            <person name="Pinto S.W.L."/>
            <person name="Hoe N.P."/>
            <person name="Porcella S.F."/>
            <person name="Deleo F.R."/>
            <person name="Musser J.M."/>
        </authorList>
    </citation>
    <scope>NUCLEOTIDE SEQUENCE [LARGE SCALE GENOMIC DNA]</scope>
    <source>
        <strain>MGCS10565</strain>
    </source>
</reference>
<dbReference type="EMBL" id="CP001129">
    <property type="protein sequence ID" value="ACG62225.1"/>
    <property type="molecule type" value="Genomic_DNA"/>
</dbReference>
<dbReference type="RefSeq" id="WP_012515497.1">
    <property type="nucleotide sequence ID" value="NC_011134.1"/>
</dbReference>
<dbReference type="SMR" id="B4U2K8"/>
<dbReference type="KEGG" id="sez:Sez_0866"/>
<dbReference type="HOGENOM" id="CLU_140243_2_0_9"/>
<dbReference type="Proteomes" id="UP000001873">
    <property type="component" value="Chromosome"/>
</dbReference>
<dbReference type="Gene3D" id="1.20.1500.10">
    <property type="entry name" value="YheA/YmcA-like"/>
    <property type="match status" value="1"/>
</dbReference>
<dbReference type="HAMAP" id="MF_01526">
    <property type="entry name" value="UPF0342"/>
    <property type="match status" value="1"/>
</dbReference>
<dbReference type="InterPro" id="IPR010368">
    <property type="entry name" value="Com_YlbF"/>
</dbReference>
<dbReference type="InterPro" id="IPR023378">
    <property type="entry name" value="YheA/YmcA-like_dom_sf"/>
</dbReference>
<dbReference type="NCBIfam" id="NF010209">
    <property type="entry name" value="PRK13676.1-1"/>
    <property type="match status" value="1"/>
</dbReference>
<dbReference type="Pfam" id="PF06133">
    <property type="entry name" value="Com_YlbF"/>
    <property type="match status" value="1"/>
</dbReference>
<dbReference type="SUPFAM" id="SSF158622">
    <property type="entry name" value="YheA/YmcA-like"/>
    <property type="match status" value="1"/>
</dbReference>
<gene>
    <name type="ordered locus">Sez_0866</name>
</gene>
<evidence type="ECO:0000255" key="1">
    <source>
        <dbReference type="HAMAP-Rule" id="MF_01526"/>
    </source>
</evidence>
<feature type="chain" id="PRO_1000198528" description="UPF0342 protein Sez_0866">
    <location>
        <begin position="1"/>
        <end position="113"/>
    </location>
</feature>
<organism>
    <name type="scientific">Streptococcus equi subsp. zooepidemicus (strain MGCS10565)</name>
    <dbReference type="NCBI Taxonomy" id="552526"/>
    <lineage>
        <taxon>Bacteria</taxon>
        <taxon>Bacillati</taxon>
        <taxon>Bacillota</taxon>
        <taxon>Bacilli</taxon>
        <taxon>Lactobacillales</taxon>
        <taxon>Streptococcaceae</taxon>
        <taxon>Streptococcus</taxon>
    </lineage>
</organism>
<name>Y866_STREM</name>
<protein>
    <recommendedName>
        <fullName evidence="1">UPF0342 protein Sez_0866</fullName>
    </recommendedName>
</protein>
<comment type="similarity">
    <text evidence="1">Belongs to the UPF0342 family.</text>
</comment>